<accession>Q00VB2</accession>
<protein>
    <recommendedName>
        <fullName>S-adenosylmethionine synthase</fullName>
        <shortName>AdoMet synthase</shortName>
        <ecNumber evidence="5">2.5.1.6</ecNumber>
    </recommendedName>
    <alternativeName>
        <fullName>Methionine adenosyltransferase</fullName>
        <shortName>MAT</shortName>
    </alternativeName>
</protein>
<dbReference type="EC" id="2.5.1.6" evidence="5"/>
<dbReference type="EMBL" id="CAID01000015">
    <property type="protein sequence ID" value="CAL57515.1"/>
    <property type="molecule type" value="Genomic_DNA"/>
</dbReference>
<dbReference type="RefSeq" id="XP_003083240.1">
    <property type="nucleotide sequence ID" value="XM_003083192.1"/>
</dbReference>
<dbReference type="SMR" id="Q00VB2"/>
<dbReference type="FunCoup" id="Q00VB2">
    <property type="interactions" value="1464"/>
</dbReference>
<dbReference type="STRING" id="70448.Q00VB2"/>
<dbReference type="GeneID" id="9830832"/>
<dbReference type="KEGG" id="ota:OT_ostta15g00955"/>
<dbReference type="eggNOG" id="KOG1506">
    <property type="taxonomic scope" value="Eukaryota"/>
</dbReference>
<dbReference type="InParanoid" id="Q00VB2"/>
<dbReference type="OMA" id="ASYMARY"/>
<dbReference type="OrthoDB" id="5852090at2759"/>
<dbReference type="UniPathway" id="UPA00315">
    <property type="reaction ID" value="UER00080"/>
</dbReference>
<dbReference type="Proteomes" id="UP000009170">
    <property type="component" value="Chromosome 15"/>
</dbReference>
<dbReference type="GO" id="GO:0005737">
    <property type="term" value="C:cytoplasm"/>
    <property type="evidence" value="ECO:0007669"/>
    <property type="project" value="UniProtKB-SubCell"/>
</dbReference>
<dbReference type="GO" id="GO:0005524">
    <property type="term" value="F:ATP binding"/>
    <property type="evidence" value="ECO:0007669"/>
    <property type="project" value="UniProtKB-KW"/>
</dbReference>
<dbReference type="GO" id="GO:0046872">
    <property type="term" value="F:metal ion binding"/>
    <property type="evidence" value="ECO:0007669"/>
    <property type="project" value="UniProtKB-KW"/>
</dbReference>
<dbReference type="GO" id="GO:0004478">
    <property type="term" value="F:methionine adenosyltransferase activity"/>
    <property type="evidence" value="ECO:0007669"/>
    <property type="project" value="UniProtKB-EC"/>
</dbReference>
<dbReference type="GO" id="GO:0006730">
    <property type="term" value="P:one-carbon metabolic process"/>
    <property type="evidence" value="ECO:0007669"/>
    <property type="project" value="UniProtKB-KW"/>
</dbReference>
<dbReference type="GO" id="GO:0006556">
    <property type="term" value="P:S-adenosylmethionine biosynthetic process"/>
    <property type="evidence" value="ECO:0007669"/>
    <property type="project" value="UniProtKB-UniPathway"/>
</dbReference>
<dbReference type="CDD" id="cd18079">
    <property type="entry name" value="S-AdoMet_synt"/>
    <property type="match status" value="1"/>
</dbReference>
<dbReference type="FunFam" id="3.30.300.10:FF:000003">
    <property type="entry name" value="S-adenosylmethionine synthase"/>
    <property type="match status" value="1"/>
</dbReference>
<dbReference type="FunFam" id="3.30.300.10:FF:000004">
    <property type="entry name" value="S-adenosylmethionine synthase"/>
    <property type="match status" value="1"/>
</dbReference>
<dbReference type="FunFam" id="3.30.300.10:FF:000011">
    <property type="entry name" value="S-adenosylmethionine synthase"/>
    <property type="match status" value="1"/>
</dbReference>
<dbReference type="Gene3D" id="3.30.300.10">
    <property type="match status" value="3"/>
</dbReference>
<dbReference type="HAMAP" id="MF_00086">
    <property type="entry name" value="S_AdoMet_synth1"/>
    <property type="match status" value="1"/>
</dbReference>
<dbReference type="InterPro" id="IPR022631">
    <property type="entry name" value="ADOMET_SYNTHASE_CS"/>
</dbReference>
<dbReference type="InterPro" id="IPR022630">
    <property type="entry name" value="S-AdoMet_synt_C"/>
</dbReference>
<dbReference type="InterPro" id="IPR022629">
    <property type="entry name" value="S-AdoMet_synt_central"/>
</dbReference>
<dbReference type="InterPro" id="IPR022628">
    <property type="entry name" value="S-AdoMet_synt_N"/>
</dbReference>
<dbReference type="InterPro" id="IPR002133">
    <property type="entry name" value="S-AdoMet_synthetase"/>
</dbReference>
<dbReference type="InterPro" id="IPR022636">
    <property type="entry name" value="S-AdoMet_synthetase_sfam"/>
</dbReference>
<dbReference type="NCBIfam" id="TIGR01034">
    <property type="entry name" value="metK"/>
    <property type="match status" value="1"/>
</dbReference>
<dbReference type="PANTHER" id="PTHR11964">
    <property type="entry name" value="S-ADENOSYLMETHIONINE SYNTHETASE"/>
    <property type="match status" value="1"/>
</dbReference>
<dbReference type="Pfam" id="PF02773">
    <property type="entry name" value="S-AdoMet_synt_C"/>
    <property type="match status" value="1"/>
</dbReference>
<dbReference type="Pfam" id="PF02772">
    <property type="entry name" value="S-AdoMet_synt_M"/>
    <property type="match status" value="1"/>
</dbReference>
<dbReference type="Pfam" id="PF00438">
    <property type="entry name" value="S-AdoMet_synt_N"/>
    <property type="match status" value="1"/>
</dbReference>
<dbReference type="PIRSF" id="PIRSF000497">
    <property type="entry name" value="MAT"/>
    <property type="match status" value="1"/>
</dbReference>
<dbReference type="SUPFAM" id="SSF55973">
    <property type="entry name" value="S-adenosylmethionine synthetase"/>
    <property type="match status" value="3"/>
</dbReference>
<dbReference type="PROSITE" id="PS00376">
    <property type="entry name" value="ADOMET_SYNTHASE_1"/>
    <property type="match status" value="1"/>
</dbReference>
<dbReference type="PROSITE" id="PS00377">
    <property type="entry name" value="ADOMET_SYNTHASE_2"/>
    <property type="match status" value="1"/>
</dbReference>
<keyword id="KW-0067">ATP-binding</keyword>
<keyword id="KW-0170">Cobalt</keyword>
<keyword id="KW-0963">Cytoplasm</keyword>
<keyword id="KW-0460">Magnesium</keyword>
<keyword id="KW-0479">Metal-binding</keyword>
<keyword id="KW-0547">Nucleotide-binding</keyword>
<keyword id="KW-0554">One-carbon metabolism</keyword>
<keyword id="KW-0630">Potassium</keyword>
<keyword id="KW-1185">Reference proteome</keyword>
<keyword id="KW-0808">Transferase</keyword>
<sequence>MGFLFTSESVNEGHPDKLADQISDGILDACLEQDPDSKVACETATKTNMVMVFGEITTKAKVDYEAVVRQVCRDVGFISNETGLDGNNCRVLVELHDQSPDIGQGVHGMGTKSLEEIGAGDQGHMFGYATDETPELMPLTHVLATKLGHRLTVVRKDGTCPWVLPDGKTQVTIEYENEGGAMIPKRVHTILISTQHIEGVSNEKIAEDLMNEVIKKVVPEKYLDADTIFHLNPSGRFVIGGPDGDAGLTGRKIIIDTYGGWGAHGGGAFSGKDPTKVDRSGAYIARQVAKSIVAAGLARRALFQISYAIGVAQPLSIHVDTYGSGKIPDSEILEKVKEKFDFRAGMIGKSLDLKRGGNKRYQTTAAYGHFGRDDTDVFTWEKVVPL</sequence>
<name>METK_OSTTA</name>
<reference key="1">
    <citation type="journal article" date="2006" name="Proc. Natl. Acad. Sci. U.S.A.">
        <title>Genome analysis of the smallest free-living eukaryote Ostreococcus tauri unveils many unique features.</title>
        <authorList>
            <person name="Derelle E."/>
            <person name="Ferraz C."/>
            <person name="Rombauts S."/>
            <person name="Rouze P."/>
            <person name="Worden A.Z."/>
            <person name="Robbens S."/>
            <person name="Partensky F."/>
            <person name="Degroeve S."/>
            <person name="Echeynie S."/>
            <person name="Cooke R."/>
            <person name="Saeys Y."/>
            <person name="Wuyts J."/>
            <person name="Jabbari K."/>
            <person name="Bowler C."/>
            <person name="Panaud O."/>
            <person name="Piegu B."/>
            <person name="Ball S.G."/>
            <person name="Ral J.-P."/>
            <person name="Bouget F.-Y."/>
            <person name="Piganeau G."/>
            <person name="De Baets B."/>
            <person name="Picard A."/>
            <person name="Delseny M."/>
            <person name="Demaille J."/>
            <person name="Van de Peer Y."/>
            <person name="Moreau H."/>
        </authorList>
    </citation>
    <scope>NUCLEOTIDE SEQUENCE [LARGE SCALE GENOMIC DNA]</scope>
    <source>
        <strain>OTTH0595</strain>
    </source>
</reference>
<proteinExistence type="inferred from homology"/>
<comment type="function">
    <text evidence="5">Catalyzes the formation of S-adenosylmethionine from methionine and ATP. The reaction comprises two steps that are both catalyzed by the same enzyme: formation of S-adenosylmethionine (AdoMet) and triphosphate, and subsequent hydrolysis of the triphosphate.</text>
</comment>
<comment type="catalytic activity">
    <reaction evidence="5">
        <text>L-methionine + ATP + H2O = S-adenosyl-L-methionine + phosphate + diphosphate</text>
        <dbReference type="Rhea" id="RHEA:21080"/>
        <dbReference type="ChEBI" id="CHEBI:15377"/>
        <dbReference type="ChEBI" id="CHEBI:30616"/>
        <dbReference type="ChEBI" id="CHEBI:33019"/>
        <dbReference type="ChEBI" id="CHEBI:43474"/>
        <dbReference type="ChEBI" id="CHEBI:57844"/>
        <dbReference type="ChEBI" id="CHEBI:59789"/>
        <dbReference type="EC" id="2.5.1.6"/>
    </reaction>
</comment>
<comment type="cofactor">
    <cofactor evidence="5">
        <name>Mn(2+)</name>
        <dbReference type="ChEBI" id="CHEBI:29035"/>
    </cofactor>
    <cofactor evidence="5">
        <name>Mg(2+)</name>
        <dbReference type="ChEBI" id="CHEBI:18420"/>
    </cofactor>
    <cofactor evidence="5">
        <name>Co(2+)</name>
        <dbReference type="ChEBI" id="CHEBI:48828"/>
    </cofactor>
    <text evidence="3 5">Binds 2 divalent ions per subunit. The metal ions interact primarily with the substrate (By similarity). Can utilize magnesium, manganese or cobalt (in vitro) (By similarity).</text>
</comment>
<comment type="cofactor">
    <cofactor evidence="5">
        <name>K(+)</name>
        <dbReference type="ChEBI" id="CHEBI:29103"/>
    </cofactor>
    <text evidence="3">Binds 1 potassium ion per subunit. The potassium ion interacts primarily with the substrate (By similarity).</text>
</comment>
<comment type="pathway">
    <text evidence="5">Amino-acid biosynthesis; S-adenosyl-L-methionine biosynthesis; S-adenosyl-L-methionine from L-methionine: step 1/1.</text>
</comment>
<comment type="subunit">
    <text evidence="1">Homotetramer.</text>
</comment>
<comment type="subcellular location">
    <subcellularLocation>
        <location evidence="1">Cytoplasm</location>
    </subcellularLocation>
</comment>
<comment type="similarity">
    <text evidence="6">Belongs to the AdoMet synthase family.</text>
</comment>
<organism>
    <name type="scientific">Ostreococcus tauri</name>
    <dbReference type="NCBI Taxonomy" id="70448"/>
    <lineage>
        <taxon>Eukaryota</taxon>
        <taxon>Viridiplantae</taxon>
        <taxon>Chlorophyta</taxon>
        <taxon>Mamiellophyceae</taxon>
        <taxon>Mamiellales</taxon>
        <taxon>Bathycoccaceae</taxon>
        <taxon>Ostreococcus</taxon>
    </lineage>
</organism>
<evidence type="ECO:0000250" key="1"/>
<evidence type="ECO:0000250" key="2">
    <source>
        <dbReference type="UniProtKB" id="P0A817"/>
    </source>
</evidence>
<evidence type="ECO:0000250" key="3">
    <source>
        <dbReference type="UniProtKB" id="P13444"/>
    </source>
</evidence>
<evidence type="ECO:0000250" key="4">
    <source>
        <dbReference type="UniProtKB" id="Q00266"/>
    </source>
</evidence>
<evidence type="ECO:0000250" key="5">
    <source>
        <dbReference type="UniProtKB" id="Q96551"/>
    </source>
</evidence>
<evidence type="ECO:0000305" key="6"/>
<gene>
    <name type="primary">METK</name>
    <name type="ordered locus">Ot15g00960</name>
</gene>
<feature type="chain" id="PRO_0000363033" description="S-adenosylmethionine synthase">
    <location>
        <begin position="1"/>
        <end position="386"/>
    </location>
</feature>
<feature type="binding site" evidence="3">
    <location>
        <position position="8"/>
    </location>
    <ligand>
        <name>Mg(2+)</name>
        <dbReference type="ChEBI" id="CHEBI:18420"/>
    </ligand>
</feature>
<feature type="binding site" description="in other chain" evidence="4">
    <location>
        <position position="14"/>
    </location>
    <ligand>
        <name>ATP</name>
        <dbReference type="ChEBI" id="CHEBI:30616"/>
        <note>ligand shared between two neighboring subunits</note>
    </ligand>
</feature>
<feature type="binding site" evidence="2">
    <location>
        <position position="42"/>
    </location>
    <ligand>
        <name>K(+)</name>
        <dbReference type="ChEBI" id="CHEBI:29103"/>
    </ligand>
</feature>
<feature type="binding site" description="in other chain" evidence="2">
    <location>
        <position position="55"/>
    </location>
    <ligand>
        <name>L-methionine</name>
        <dbReference type="ChEBI" id="CHEBI:57844"/>
        <note>ligand shared between two neighboring subunits</note>
    </ligand>
</feature>
<feature type="binding site" description="in other chain" evidence="2">
    <location>
        <position position="98"/>
    </location>
    <ligand>
        <name>L-methionine</name>
        <dbReference type="ChEBI" id="CHEBI:57844"/>
        <note>ligand shared between two neighboring subunits</note>
    </ligand>
</feature>
<feature type="binding site" description="in other chain" evidence="4">
    <location>
        <begin position="166"/>
        <end position="168"/>
    </location>
    <ligand>
        <name>ATP</name>
        <dbReference type="ChEBI" id="CHEBI:30616"/>
        <note>ligand shared between two neighboring subunits</note>
    </ligand>
</feature>
<feature type="binding site" description="in other chain" evidence="4">
    <location>
        <begin position="234"/>
        <end position="237"/>
    </location>
    <ligand>
        <name>ATP</name>
        <dbReference type="ChEBI" id="CHEBI:30616"/>
        <note>ligand shared between two neighboring subunits</note>
    </ligand>
</feature>
<feature type="binding site" description="in other chain" evidence="4">
    <location>
        <position position="245"/>
    </location>
    <ligand>
        <name>ATP</name>
        <dbReference type="ChEBI" id="CHEBI:30616"/>
        <note>ligand shared between two neighboring subunits</note>
    </ligand>
</feature>
<feature type="binding site" evidence="2">
    <location>
        <position position="245"/>
    </location>
    <ligand>
        <name>L-methionine</name>
        <dbReference type="ChEBI" id="CHEBI:57844"/>
        <note>ligand shared between two neighboring subunits</note>
    </ligand>
</feature>
<feature type="binding site" description="in other chain" evidence="2">
    <location>
        <begin position="251"/>
        <end position="252"/>
    </location>
    <ligand>
        <name>ATP</name>
        <dbReference type="ChEBI" id="CHEBI:30616"/>
        <note>ligand shared between two neighboring subunits</note>
    </ligand>
</feature>
<feature type="binding site" evidence="2">
    <location>
        <position position="268"/>
    </location>
    <ligand>
        <name>ATP</name>
        <dbReference type="ChEBI" id="CHEBI:30616"/>
        <note>ligand shared between two neighboring subunits</note>
    </ligand>
</feature>
<feature type="binding site" evidence="2">
    <location>
        <position position="272"/>
    </location>
    <ligand>
        <name>ATP</name>
        <dbReference type="ChEBI" id="CHEBI:30616"/>
        <note>ligand shared between two neighboring subunits</note>
    </ligand>
</feature>
<feature type="binding site" evidence="3">
    <location>
        <position position="276"/>
    </location>
    <ligand>
        <name>ATP</name>
        <dbReference type="ChEBI" id="CHEBI:30616"/>
        <note>ligand shared between two neighboring subunits</note>
    </ligand>
</feature>
<feature type="binding site" description="in other chain" evidence="2">
    <location>
        <position position="276"/>
    </location>
    <ligand>
        <name>L-methionine</name>
        <dbReference type="ChEBI" id="CHEBI:57844"/>
        <note>ligand shared between two neighboring subunits</note>
    </ligand>
</feature>